<organism evidence="10">
    <name type="scientific">Rattus norvegicus</name>
    <name type="common">Rat</name>
    <dbReference type="NCBI Taxonomy" id="10116"/>
    <lineage>
        <taxon>Eukaryota</taxon>
        <taxon>Metazoa</taxon>
        <taxon>Chordata</taxon>
        <taxon>Craniata</taxon>
        <taxon>Vertebrata</taxon>
        <taxon>Euteleostomi</taxon>
        <taxon>Mammalia</taxon>
        <taxon>Eutheria</taxon>
        <taxon>Euarchontoglires</taxon>
        <taxon>Glires</taxon>
        <taxon>Rodentia</taxon>
        <taxon>Myomorpha</taxon>
        <taxon>Muroidea</taxon>
        <taxon>Muridae</taxon>
        <taxon>Murinae</taxon>
        <taxon>Rattus</taxon>
    </lineage>
</organism>
<proteinExistence type="evidence at protein level"/>
<evidence type="ECO:0000250" key="1">
    <source>
        <dbReference type="UniProtKB" id="P51610"/>
    </source>
</evidence>
<evidence type="ECO:0000250" key="2">
    <source>
        <dbReference type="UniProtKB" id="Q61191"/>
    </source>
</evidence>
<evidence type="ECO:0000255" key="3"/>
<evidence type="ECO:0000255" key="4">
    <source>
        <dbReference type="PROSITE-ProRule" id="PRU00316"/>
    </source>
</evidence>
<evidence type="ECO:0000256" key="5">
    <source>
        <dbReference type="SAM" id="MobiDB-lite"/>
    </source>
</evidence>
<evidence type="ECO:0000269" key="6">
    <source>
    </source>
</evidence>
<evidence type="ECO:0000269" key="7">
    <source>
    </source>
</evidence>
<evidence type="ECO:0000303" key="8">
    <source>
    </source>
</evidence>
<evidence type="ECO:0000305" key="9"/>
<evidence type="ECO:0000312" key="10">
    <source>
        <dbReference type="Proteomes" id="UP000002494"/>
    </source>
</evidence>
<evidence type="ECO:0000312" key="11">
    <source>
        <dbReference type="RGD" id="1563804"/>
    </source>
</evidence>
<evidence type="ECO:0007744" key="12">
    <source>
    </source>
</evidence>
<evidence type="ECO:0007744" key="13">
    <source>
    </source>
</evidence>
<protein>
    <recommendedName>
        <fullName evidence="8">Host cell factor 1</fullName>
        <shortName evidence="1">HCF</shortName>
        <shortName evidence="8">HCF-1</shortName>
    </recommendedName>
    <alternativeName>
        <fullName evidence="1">C1 factor</fullName>
    </alternativeName>
    <component>
        <recommendedName>
            <fullName evidence="1">HCF N-terminal chain 1</fullName>
        </recommendedName>
    </component>
    <component>
        <recommendedName>
            <fullName evidence="1">HCF N-terminal chain 2</fullName>
        </recommendedName>
    </component>
    <component>
        <recommendedName>
            <fullName evidence="1">HCF N-terminal chain 3</fullName>
        </recommendedName>
    </component>
    <component>
        <recommendedName>
            <fullName evidence="1">HCF N-terminal chain 4</fullName>
        </recommendedName>
    </component>
    <component>
        <recommendedName>
            <fullName evidence="1">HCF N-terminal chain 5</fullName>
        </recommendedName>
    </component>
    <component>
        <recommendedName>
            <fullName evidence="1">HCF N-terminal chain 6</fullName>
        </recommendedName>
    </component>
    <component>
        <recommendedName>
            <fullName evidence="1">HCF C-terminal chain 1</fullName>
        </recommendedName>
    </component>
    <component>
        <recommendedName>
            <fullName evidence="1">HCF C-terminal chain 2</fullName>
        </recommendedName>
    </component>
    <component>
        <recommendedName>
            <fullName evidence="1">HCF C-terminal chain 3</fullName>
        </recommendedName>
    </component>
    <component>
        <recommendedName>
            <fullName evidence="1">HCF C-terminal chain 4</fullName>
        </recommendedName>
    </component>
    <component>
        <recommendedName>
            <fullName evidence="1">HCF C-terminal chain 5</fullName>
        </recommendedName>
    </component>
    <component>
        <recommendedName>
            <fullName evidence="1">HCF C-terminal chain 6</fullName>
        </recommendedName>
    </component>
</protein>
<keyword id="KW-0007">Acetylation</keyword>
<keyword id="KW-0068">Autocatalytic cleavage</keyword>
<keyword id="KW-0131">Cell cycle</keyword>
<keyword id="KW-0156">Chromatin regulator</keyword>
<keyword id="KW-0175">Coiled coil</keyword>
<keyword id="KW-0963">Cytoplasm</keyword>
<keyword id="KW-0325">Glycoprotein</keyword>
<keyword id="KW-0945">Host-virus interaction</keyword>
<keyword id="KW-1017">Isopeptide bond</keyword>
<keyword id="KW-0880">Kelch repeat</keyword>
<keyword id="KW-0488">Methylation</keyword>
<keyword id="KW-0539">Nucleus</keyword>
<keyword id="KW-0597">Phosphoprotein</keyword>
<keyword id="KW-1185">Reference proteome</keyword>
<keyword id="KW-0677">Repeat</keyword>
<keyword id="KW-0832">Ubl conjugation</keyword>
<accession>D3ZN95</accession>
<dbReference type="EMBL" id="AABR07071934">
    <property type="status" value="NOT_ANNOTATED_CDS"/>
    <property type="molecule type" value="Genomic_DNA"/>
</dbReference>
<dbReference type="RefSeq" id="NP_001132979.1">
    <property type="nucleotide sequence ID" value="NM_001139507.1"/>
</dbReference>
<dbReference type="SMR" id="D3ZN95"/>
<dbReference type="FunCoup" id="D3ZN95">
    <property type="interactions" value="3511"/>
</dbReference>
<dbReference type="STRING" id="10116.ENSRNOP00000073793"/>
<dbReference type="GlyGen" id="D3ZN95">
    <property type="glycosylation" value="4 sites, 1 O-linked glycan (1 site)"/>
</dbReference>
<dbReference type="iPTMnet" id="D3ZN95"/>
<dbReference type="PhosphoSitePlus" id="D3ZN95"/>
<dbReference type="jPOST" id="D3ZN95"/>
<dbReference type="PaxDb" id="10116-ENSRNOP00000060327"/>
<dbReference type="PeptideAtlas" id="D3ZN95"/>
<dbReference type="AGR" id="RGD:1563804"/>
<dbReference type="RGD" id="1563804">
    <property type="gene designation" value="Hcfc1"/>
</dbReference>
<dbReference type="VEuPathDB" id="HostDB:ENSRNOG00000051948"/>
<dbReference type="eggNOG" id="KOG4152">
    <property type="taxonomic scope" value="Eukaryota"/>
</dbReference>
<dbReference type="HOGENOM" id="CLU_002603_0_0_1"/>
<dbReference type="InParanoid" id="D3ZN95"/>
<dbReference type="Reactome" id="R-RNO-3214847">
    <property type="pathway name" value="HATs acetylate histones"/>
</dbReference>
<dbReference type="Reactome" id="R-RNO-5689603">
    <property type="pathway name" value="UCH proteinases"/>
</dbReference>
<dbReference type="Reactome" id="R-RNO-9772755">
    <property type="pathway name" value="Formation of WDR5-containing histone-modifying complexes"/>
</dbReference>
<dbReference type="PRO" id="PR:D3ZN95"/>
<dbReference type="Proteomes" id="UP000002494">
    <property type="component" value="Chromosome X"/>
</dbReference>
<dbReference type="Bgee" id="ENSRNOG00000051948">
    <property type="expression patterns" value="Expressed in Ammon's horn and 19 other cell types or tissues"/>
</dbReference>
<dbReference type="GO" id="GO:0030424">
    <property type="term" value="C:axon"/>
    <property type="evidence" value="ECO:0000314"/>
    <property type="project" value="RGD"/>
</dbReference>
<dbReference type="GO" id="GO:0005737">
    <property type="term" value="C:cytoplasm"/>
    <property type="evidence" value="ECO:0000266"/>
    <property type="project" value="RGD"/>
</dbReference>
<dbReference type="GO" id="GO:0030425">
    <property type="term" value="C:dendrite"/>
    <property type="evidence" value="ECO:0000314"/>
    <property type="project" value="RGD"/>
</dbReference>
<dbReference type="GO" id="GO:0000123">
    <property type="term" value="C:histone acetyltransferase complex"/>
    <property type="evidence" value="ECO:0000266"/>
    <property type="project" value="RGD"/>
</dbReference>
<dbReference type="GO" id="GO:0035097">
    <property type="term" value="C:histone methyltransferase complex"/>
    <property type="evidence" value="ECO:0000318"/>
    <property type="project" value="GO_Central"/>
</dbReference>
<dbReference type="GO" id="GO:0071339">
    <property type="term" value="C:MLL1 complex"/>
    <property type="evidence" value="ECO:0000266"/>
    <property type="project" value="RGD"/>
</dbReference>
<dbReference type="GO" id="GO:0044665">
    <property type="term" value="C:MLL1/2 complex"/>
    <property type="evidence" value="ECO:0000266"/>
    <property type="project" value="RGD"/>
</dbReference>
<dbReference type="GO" id="GO:0043025">
    <property type="term" value="C:neuronal cell body"/>
    <property type="evidence" value="ECO:0000266"/>
    <property type="project" value="RGD"/>
</dbReference>
<dbReference type="GO" id="GO:0044545">
    <property type="term" value="C:NSL complex"/>
    <property type="evidence" value="ECO:0000266"/>
    <property type="project" value="RGD"/>
</dbReference>
<dbReference type="GO" id="GO:0000228">
    <property type="term" value="C:nuclear chromosome"/>
    <property type="evidence" value="ECO:0000314"/>
    <property type="project" value="UniProtKB"/>
</dbReference>
<dbReference type="GO" id="GO:0005634">
    <property type="term" value="C:nucleus"/>
    <property type="evidence" value="ECO:0000266"/>
    <property type="project" value="RGD"/>
</dbReference>
<dbReference type="GO" id="GO:0032991">
    <property type="term" value="C:protein-containing complex"/>
    <property type="evidence" value="ECO:0000266"/>
    <property type="project" value="RGD"/>
</dbReference>
<dbReference type="GO" id="GO:0048188">
    <property type="term" value="C:Set1C/COMPASS complex"/>
    <property type="evidence" value="ECO:0000266"/>
    <property type="project" value="RGD"/>
</dbReference>
<dbReference type="GO" id="GO:0003682">
    <property type="term" value="F:chromatin binding"/>
    <property type="evidence" value="ECO:0000266"/>
    <property type="project" value="RGD"/>
</dbReference>
<dbReference type="GO" id="GO:0031490">
    <property type="term" value="F:chromatin DNA binding"/>
    <property type="evidence" value="ECO:0000266"/>
    <property type="project" value="RGD"/>
</dbReference>
<dbReference type="GO" id="GO:0140297">
    <property type="term" value="F:DNA-binding transcription factor binding"/>
    <property type="evidence" value="ECO:0000266"/>
    <property type="project" value="RGD"/>
</dbReference>
<dbReference type="GO" id="GO:0042802">
    <property type="term" value="F:identical protein binding"/>
    <property type="evidence" value="ECO:0000266"/>
    <property type="project" value="RGD"/>
</dbReference>
<dbReference type="GO" id="GO:0030674">
    <property type="term" value="F:protein-macromolecule adaptor activity"/>
    <property type="evidence" value="ECO:0000266"/>
    <property type="project" value="RGD"/>
</dbReference>
<dbReference type="GO" id="GO:0000978">
    <property type="term" value="F:RNA polymerase II cis-regulatory region sequence-specific DNA binding"/>
    <property type="evidence" value="ECO:0000266"/>
    <property type="project" value="RGD"/>
</dbReference>
<dbReference type="GO" id="GO:0003713">
    <property type="term" value="F:transcription coactivator activity"/>
    <property type="evidence" value="ECO:0000266"/>
    <property type="project" value="RGD"/>
</dbReference>
<dbReference type="GO" id="GO:0001835">
    <property type="term" value="P:blastocyst hatching"/>
    <property type="evidence" value="ECO:0000266"/>
    <property type="project" value="RGD"/>
</dbReference>
<dbReference type="GO" id="GO:0006338">
    <property type="term" value="P:chromatin remodeling"/>
    <property type="evidence" value="ECO:0000318"/>
    <property type="project" value="GO_Central"/>
</dbReference>
<dbReference type="GO" id="GO:0000122">
    <property type="term" value="P:negative regulation of transcription by RNA polymerase II"/>
    <property type="evidence" value="ECO:0000315"/>
    <property type="project" value="UniProtKB"/>
</dbReference>
<dbReference type="GO" id="GO:0045893">
    <property type="term" value="P:positive regulation of DNA-templated transcription"/>
    <property type="evidence" value="ECO:0000266"/>
    <property type="project" value="RGD"/>
</dbReference>
<dbReference type="GO" id="GO:0010628">
    <property type="term" value="P:positive regulation of gene expression"/>
    <property type="evidence" value="ECO:0000266"/>
    <property type="project" value="RGD"/>
</dbReference>
<dbReference type="GO" id="GO:0035774">
    <property type="term" value="P:positive regulation of insulin secretion involved in cellular response to glucose stimulus"/>
    <property type="evidence" value="ECO:0000315"/>
    <property type="project" value="UniProtKB"/>
</dbReference>
<dbReference type="GO" id="GO:0045944">
    <property type="term" value="P:positive regulation of transcription by RNA polymerase II"/>
    <property type="evidence" value="ECO:0000315"/>
    <property type="project" value="UniProtKB"/>
</dbReference>
<dbReference type="GO" id="GO:0050821">
    <property type="term" value="P:protein stabilization"/>
    <property type="evidence" value="ECO:0000266"/>
    <property type="project" value="RGD"/>
</dbReference>
<dbReference type="GO" id="GO:0006355">
    <property type="term" value="P:regulation of DNA-templated transcription"/>
    <property type="evidence" value="ECO:0000266"/>
    <property type="project" value="RGD"/>
</dbReference>
<dbReference type="GO" id="GO:0043254">
    <property type="term" value="P:regulation of protein-containing complex assembly"/>
    <property type="evidence" value="ECO:0000266"/>
    <property type="project" value="RGD"/>
</dbReference>
<dbReference type="GO" id="GO:0019046">
    <property type="term" value="P:release from viral latency"/>
    <property type="evidence" value="ECO:0000266"/>
    <property type="project" value="RGD"/>
</dbReference>
<dbReference type="CDD" id="cd00063">
    <property type="entry name" value="FN3"/>
    <property type="match status" value="2"/>
</dbReference>
<dbReference type="FunFam" id="2.60.40.10:FF:000443">
    <property type="entry name" value="host cell factor 1"/>
    <property type="match status" value="1"/>
</dbReference>
<dbReference type="FunFam" id="2.60.40.10:FF:000259">
    <property type="entry name" value="Host cell factor 1 (Predicted)"/>
    <property type="match status" value="1"/>
</dbReference>
<dbReference type="FunFam" id="2.120.10.80:FF:000008">
    <property type="entry name" value="host cell factor 1 isoform X1"/>
    <property type="match status" value="1"/>
</dbReference>
<dbReference type="FunFam" id="2.120.10.80:FF:000015">
    <property type="entry name" value="host cell factor 1 isoform X1"/>
    <property type="match status" value="1"/>
</dbReference>
<dbReference type="Gene3D" id="6.10.250.2590">
    <property type="match status" value="1"/>
</dbReference>
<dbReference type="Gene3D" id="2.60.40.10">
    <property type="entry name" value="Immunoglobulins"/>
    <property type="match status" value="2"/>
</dbReference>
<dbReference type="Gene3D" id="2.120.10.80">
    <property type="entry name" value="Kelch-type beta propeller"/>
    <property type="match status" value="2"/>
</dbReference>
<dbReference type="InterPro" id="IPR003961">
    <property type="entry name" value="FN3_dom"/>
</dbReference>
<dbReference type="InterPro" id="IPR036116">
    <property type="entry name" value="FN3_sf"/>
</dbReference>
<dbReference type="InterPro" id="IPR043536">
    <property type="entry name" value="HCF1/2"/>
</dbReference>
<dbReference type="InterPro" id="IPR013783">
    <property type="entry name" value="Ig-like_fold"/>
</dbReference>
<dbReference type="InterPro" id="IPR015915">
    <property type="entry name" value="Kelch-typ_b-propeller"/>
</dbReference>
<dbReference type="PANTHER" id="PTHR46003">
    <property type="entry name" value="HOST CELL FACTOR"/>
    <property type="match status" value="1"/>
</dbReference>
<dbReference type="PANTHER" id="PTHR46003:SF3">
    <property type="entry name" value="HOST CELL FACTOR 1"/>
    <property type="match status" value="1"/>
</dbReference>
<dbReference type="Pfam" id="PF13854">
    <property type="entry name" value="Kelch_HCF"/>
    <property type="match status" value="1"/>
</dbReference>
<dbReference type="SMART" id="SM00060">
    <property type="entry name" value="FN3"/>
    <property type="match status" value="2"/>
</dbReference>
<dbReference type="SUPFAM" id="SSF49265">
    <property type="entry name" value="Fibronectin type III"/>
    <property type="match status" value="1"/>
</dbReference>
<dbReference type="SUPFAM" id="SSF117281">
    <property type="entry name" value="Kelch motif"/>
    <property type="match status" value="1"/>
</dbReference>
<dbReference type="PROSITE" id="PS50853">
    <property type="entry name" value="FN3"/>
    <property type="match status" value="3"/>
</dbReference>
<name>HCFC1_RAT</name>
<comment type="function">
    <text evidence="1 6 7">Transcriptional coregulator (PubMed:24250814). Serves as a scaffold protein, bridging interactions between transcription factors, including THAP11 and ZNF143, and transcriptional coregulators (By similarity). Involved in control of the cell cycle (By similarity). Also antagonizes transactivation by ZBTB17 and GABP2; represses ZBTB17 activation of the p15(INK4b) promoter and inhibits its ability to recruit p300 (By similarity). Coactivator for EGR2 and GABP2 (By similarity). Tethers the chromatin modifying Set1/Ash2 histone H3 'Lys-4' methyltransferase (H3K4me) and Sin3 histone deacetylase (HDAC) complexes (involved in the activation and repression of transcription, respectively) together (By similarity). Component of a THAP1/THAP3-HCFC1-OGT complex that is required for the regulation of the transcriptional activity of RRM1 (By similarity). As part of the NSL complex it may be involved in acetylation of nucleosomal histone H4 on several lysine residues (By similarity). Recruits KMT2E/MLL5 to E2F1 responsive promoters promoting transcriptional activation and thereby facilitates G1 to S phase transition (By similarity). Modulates expression of homeobox protein PDX1, perhaps acting in concert with transcription factor E2F1, thereby regulating pancreatic beta-cell growth and glucose-stimulated insulin secretion (PubMed:24250814). May negatively modulate transcriptional activity of FOXO3 (PubMed:21909281).</text>
</comment>
<comment type="subunit">
    <text evidence="1 2">Composed predominantly of six polypeptides ranging from 110 to 150 kDa and a minor 300 kDa polypeptide. The majority of N- and C-terminal cleavage products remain tightly, albeit non-covalently, associated. Interacts with POU2F1, CREB3, ZBTB17, EGR2, E2F4, CREBZF, SP1, GABP2, Sin3 HDAC complex (SIN3A, HDAC1, HDAC2, SUDS3), SAP30, SIN3B and FHL2. Component of a MLL1 complex, composed of at least the core components KMT2A/MLL1, ASH2L, HCFC1, WDR5 and RBBP5, as well as the facultative components BACC1, CHD8, DPY30, E2F6, HCFC2, HSP70, INO80C, KANSL1, LAS1L, MAX, MCRS1, MEN1, MGA, KAT8, PELP1, PHF20, PRP31, RING2, RUVBL1, RUVBL2, SENP3, TAF1, TAF4, TAF6, TAF7, TAF9 and TEX10. Component of a THAP1/THAP3-HCFC1-OGT complex that is required for the regulation of the transcriptional activity of RRM1. Interacts directly with THAP3 (via its HBM). Interacts (via the Kelch-repeat domain) with THAP1 (via the HBM); the interaction recruits HCHC1 to the RRM1. Interacts with THAP7 and THAP11 (via the HMB) (By similarity). Interacts directly with OGT; the interaction, which requires the HCFC1 cleavage site domain, glycosylates and promotes the proteolytic processing of HCFC1, retains OGT in the nucleus and impacts the expression of herpes simplex virus immediate early viral genes. Component of the SET1 complex, at least composed of the catalytic subunit (SETD1A or SETD1B), WDR5, WDR82, RBBP5, ASH2L, CXXC1, HCFC1 and DPY30. Component of the NSL complex at least composed of MOF/KAT8, KANSL1, KANSL2, KANSL3, MCRS1, PHF20, OGT1/OGT, WDR5 and HCFC1. Component of a complex at least composed of ZNF335, HCFC1, CCAR2, EMSY, MKI67, RBBP5, ASH2L and WDR5; the complex is formed as a result of interactions between components of a nuclear receptor-mediated transcription complex and a histone methylation complex. Within the complex interacts with ZNF335. Interacts with TET2 and TET3. Interacts with HCFC1R1 (By similarity). Interacts with THAP11 (By similarity). Interacts (via Kelch domain) with KMT2E/MLL5 isoform 3 (via HBM motif). Interacts with E2F1 (By similarity). Accessory scaffold component of the polycomb repressive deubiquitinase (PR-DUB) complex, at least composed of BAP1, one of ASXL1, ASXL2 or (probably) ASXL3 and one of MBD5 or MBD6; the PR-DUB core associates with a number of accessory proteins, including FOXK1, FOXK2, KDM1B, HCFC1, YY1 and OGT (By similarity). Interacts with YY1 (via Gly-rich region); the interaction is direct (By similarity). Interacts with BAP1 (via HBM-like motif) (By similarity).</text>
</comment>
<comment type="subcellular location">
    <subcellularLocation>
        <location evidence="1">Cytoplasm</location>
    </subcellularLocation>
    <subcellularLocation>
        <location evidence="1">Nucleus</location>
    </subcellularLocation>
    <text evidence="1">HCFC1R1 modulates its subcellular localization and overexpression of HCFC1R1 leads to accumulation of HCFC1 in the cytoplasm. Non-processed HCFC1 associates with chromatin. Colocalizes with CREB3 and CANX in the ER.</text>
</comment>
<comment type="domain">
    <text evidence="1">The HCF repeat is a highly specific proteolytic cleavage signal.</text>
</comment>
<comment type="domain">
    <text evidence="1">The kelch repeats fold into a 6-bladed kelch beta-propeller called the beta-propeller domain which mediates interaction with HCFC1R1.</text>
</comment>
<comment type="PTM">
    <text evidence="1">Proteolytically cleaved at one or several PPCE--THET sites within the HCF repeats. Further cleavage of the primary N- and C-terminal chains results in a 'trimming' and accumulation of the smaller chains. Cleavage is promoted by O-glycosylation.</text>
</comment>
<comment type="PTM">
    <text evidence="1">O-glycosylated. GlcNAcylation by OGT promotes proteolytic processing.</text>
</comment>
<comment type="PTM">
    <text evidence="1">Ubiquitinated. Lys-1818 and Lys-1819 are ubiquitinated both via 'Lys-48'- and 'Lys-63'-linked polyubiquitin chains. BAP1 mediated deubiquitination of 'Lys-48'-linked polyubiquitin chains; deubiquitination by BAP1 does not seem to stabilize the protein.</text>
</comment>
<reference evidence="10" key="1">
    <citation type="journal article" date="2004" name="Nature">
        <title>Genome sequence of the Brown Norway rat yields insights into mammalian evolution.</title>
        <authorList>
            <person name="Gibbs R.A."/>
            <person name="Weinstock G.M."/>
            <person name="Metzker M.L."/>
            <person name="Muzny D.M."/>
            <person name="Sodergren E.J."/>
            <person name="Scherer S."/>
            <person name="Scott G."/>
            <person name="Steffen D."/>
            <person name="Worley K.C."/>
            <person name="Burch P.E."/>
            <person name="Okwuonu G."/>
            <person name="Hines S."/>
            <person name="Lewis L."/>
            <person name="Deramo C."/>
            <person name="Delgado O."/>
            <person name="Dugan-Rocha S."/>
            <person name="Miner G."/>
            <person name="Morgan M."/>
            <person name="Hawes A."/>
            <person name="Gill R."/>
            <person name="Holt R.A."/>
            <person name="Adams M.D."/>
            <person name="Amanatides P.G."/>
            <person name="Baden-Tillson H."/>
            <person name="Barnstead M."/>
            <person name="Chin S."/>
            <person name="Evans C.A."/>
            <person name="Ferriera S."/>
            <person name="Fosler C."/>
            <person name="Glodek A."/>
            <person name="Gu Z."/>
            <person name="Jennings D."/>
            <person name="Kraft C.L."/>
            <person name="Nguyen T."/>
            <person name="Pfannkoch C.M."/>
            <person name="Sitter C."/>
            <person name="Sutton G.G."/>
            <person name="Venter J.C."/>
            <person name="Woodage T."/>
            <person name="Smith D."/>
            <person name="Lee H.-M."/>
            <person name="Gustafson E."/>
            <person name="Cahill P."/>
            <person name="Kana A."/>
            <person name="Doucette-Stamm L."/>
            <person name="Weinstock K."/>
            <person name="Fechtel K."/>
            <person name="Weiss R.B."/>
            <person name="Dunn D.M."/>
            <person name="Green E.D."/>
            <person name="Blakesley R.W."/>
            <person name="Bouffard G.G."/>
            <person name="De Jong P.J."/>
            <person name="Osoegawa K."/>
            <person name="Zhu B."/>
            <person name="Marra M."/>
            <person name="Schein J."/>
            <person name="Bosdet I."/>
            <person name="Fjell C."/>
            <person name="Jones S."/>
            <person name="Krzywinski M."/>
            <person name="Mathewson C."/>
            <person name="Siddiqui A."/>
            <person name="Wye N."/>
            <person name="McPherson J."/>
            <person name="Zhao S."/>
            <person name="Fraser C.M."/>
            <person name="Shetty J."/>
            <person name="Shatsman S."/>
            <person name="Geer K."/>
            <person name="Chen Y."/>
            <person name="Abramzon S."/>
            <person name="Nierman W.C."/>
            <person name="Havlak P.H."/>
            <person name="Chen R."/>
            <person name="Durbin K.J."/>
            <person name="Egan A."/>
            <person name="Ren Y."/>
            <person name="Song X.-Z."/>
            <person name="Li B."/>
            <person name="Liu Y."/>
            <person name="Qin X."/>
            <person name="Cawley S."/>
            <person name="Cooney A.J."/>
            <person name="D'Souza L.M."/>
            <person name="Martin K."/>
            <person name="Wu J.Q."/>
            <person name="Gonzalez-Garay M.L."/>
            <person name="Jackson A.R."/>
            <person name="Kalafus K.J."/>
            <person name="McLeod M.P."/>
            <person name="Milosavljevic A."/>
            <person name="Virk D."/>
            <person name="Volkov A."/>
            <person name="Wheeler D.A."/>
            <person name="Zhang Z."/>
            <person name="Bailey J.A."/>
            <person name="Eichler E.E."/>
            <person name="Tuzun E."/>
            <person name="Birney E."/>
            <person name="Mongin E."/>
            <person name="Ureta-Vidal A."/>
            <person name="Woodwark C."/>
            <person name="Zdobnov E."/>
            <person name="Bork P."/>
            <person name="Suyama M."/>
            <person name="Torrents D."/>
            <person name="Alexandersson M."/>
            <person name="Trask B.J."/>
            <person name="Young J.M."/>
            <person name="Huang H."/>
            <person name="Wang H."/>
            <person name="Xing H."/>
            <person name="Daniels S."/>
            <person name="Gietzen D."/>
            <person name="Schmidt J."/>
            <person name="Stevens K."/>
            <person name="Vitt U."/>
            <person name="Wingrove J."/>
            <person name="Camara F."/>
            <person name="Mar Alba M."/>
            <person name="Abril J.F."/>
            <person name="Guigo R."/>
            <person name="Smit A."/>
            <person name="Dubchak I."/>
            <person name="Rubin E.M."/>
            <person name="Couronne O."/>
            <person name="Poliakov A."/>
            <person name="Huebner N."/>
            <person name="Ganten D."/>
            <person name="Goesele C."/>
            <person name="Hummel O."/>
            <person name="Kreitler T."/>
            <person name="Lee Y.-A."/>
            <person name="Monti J."/>
            <person name="Schulz H."/>
            <person name="Zimdahl H."/>
            <person name="Himmelbauer H."/>
            <person name="Lehrach H."/>
            <person name="Jacob H.J."/>
            <person name="Bromberg S."/>
            <person name="Gullings-Handley J."/>
            <person name="Jensen-Seaman M.I."/>
            <person name="Kwitek A.E."/>
            <person name="Lazar J."/>
            <person name="Pasko D."/>
            <person name="Tonellato P.J."/>
            <person name="Twigger S."/>
            <person name="Ponting C.P."/>
            <person name="Duarte J.M."/>
            <person name="Rice S."/>
            <person name="Goodstadt L."/>
            <person name="Beatson S.A."/>
            <person name="Emes R.D."/>
            <person name="Winter E.E."/>
            <person name="Webber C."/>
            <person name="Brandt P."/>
            <person name="Nyakatura G."/>
            <person name="Adetobi M."/>
            <person name="Chiaromonte F."/>
            <person name="Elnitski L."/>
            <person name="Eswara P."/>
            <person name="Hardison R.C."/>
            <person name="Hou M."/>
            <person name="Kolbe D."/>
            <person name="Makova K."/>
            <person name="Miller W."/>
            <person name="Nekrutenko A."/>
            <person name="Riemer C."/>
            <person name="Schwartz S."/>
            <person name="Taylor J."/>
            <person name="Yang S."/>
            <person name="Zhang Y."/>
            <person name="Lindpaintner K."/>
            <person name="Andrews T.D."/>
            <person name="Caccamo M."/>
            <person name="Clamp M."/>
            <person name="Clarke L."/>
            <person name="Curwen V."/>
            <person name="Durbin R.M."/>
            <person name="Eyras E."/>
            <person name="Searle S.M."/>
            <person name="Cooper G.M."/>
            <person name="Batzoglou S."/>
            <person name="Brudno M."/>
            <person name="Sidow A."/>
            <person name="Stone E.A."/>
            <person name="Payseur B.A."/>
            <person name="Bourque G."/>
            <person name="Lopez-Otin C."/>
            <person name="Puente X.S."/>
            <person name="Chakrabarti K."/>
            <person name="Chatterji S."/>
            <person name="Dewey C."/>
            <person name="Pachter L."/>
            <person name="Bray N."/>
            <person name="Yap V.B."/>
            <person name="Caspi A."/>
            <person name="Tesler G."/>
            <person name="Pevzner P.A."/>
            <person name="Haussler D."/>
            <person name="Roskin K.M."/>
            <person name="Baertsch R."/>
            <person name="Clawson H."/>
            <person name="Furey T.S."/>
            <person name="Hinrichs A.S."/>
            <person name="Karolchik D."/>
            <person name="Kent W.J."/>
            <person name="Rosenbloom K.R."/>
            <person name="Trumbower H."/>
            <person name="Weirauch M."/>
            <person name="Cooper D.N."/>
            <person name="Stenson P.D."/>
            <person name="Ma B."/>
            <person name="Brent M."/>
            <person name="Arumugam M."/>
            <person name="Shteynberg D."/>
            <person name="Copley R.R."/>
            <person name="Taylor M.S."/>
            <person name="Riethman H."/>
            <person name="Mudunuri U."/>
            <person name="Peterson J."/>
            <person name="Guyer M."/>
            <person name="Felsenfeld A."/>
            <person name="Old S."/>
            <person name="Mockrin S."/>
            <person name="Collins F.S."/>
        </authorList>
    </citation>
    <scope>NUCLEOTIDE SEQUENCE [LARGE SCALE GENOMIC DNA]</scope>
    <source>
        <strain evidence="10">Brown Norway</strain>
    </source>
</reference>
<reference evidence="12" key="2">
    <citation type="journal article" date="2006" name="Proc. Natl. Acad. Sci. U.S.A.">
        <title>Quantitative phosphoproteomics of vasopressin-sensitive renal cells: regulation of aquaporin-2 phosphorylation at two sites.</title>
        <authorList>
            <person name="Hoffert J.D."/>
            <person name="Pisitkun T."/>
            <person name="Wang G."/>
            <person name="Shen R.-F."/>
            <person name="Knepper M.A."/>
        </authorList>
    </citation>
    <scope>IDENTIFICATION BY MASS SPECTROMETRY [LARGE SCALE ANALYSIS]</scope>
</reference>
<reference evidence="9" key="3">
    <citation type="journal article" date="2011" name="PLoS Genet.">
        <title>The evolutionarily conserved longevity determinants HCF-1 and SIR-2.1/SIRT1 collaborate to regulate DAF-16/FOXO.</title>
        <authorList>
            <person name="Rizki G."/>
            <person name="Iwata T.N."/>
            <person name="Li J."/>
            <person name="Riedel C.G."/>
            <person name="Picard C.L."/>
            <person name="Jan M."/>
            <person name="Murphy C.T."/>
            <person name="Lee S.S."/>
        </authorList>
    </citation>
    <scope>FUNCTION</scope>
</reference>
<reference evidence="13" key="4">
    <citation type="journal article" date="2012" name="Nat. Commun.">
        <title>Quantitative maps of protein phosphorylation sites across 14 different rat organs and tissues.</title>
        <authorList>
            <person name="Lundby A."/>
            <person name="Secher A."/>
            <person name="Lage K."/>
            <person name="Nordsborg N.B."/>
            <person name="Dmytriyev A."/>
            <person name="Lundby C."/>
            <person name="Olsen J.V."/>
        </authorList>
    </citation>
    <scope>IDENTIFICATION BY MASS SPECTROMETRY [LARGE SCALE ANALYSIS]</scope>
</reference>
<reference evidence="9" key="5">
    <citation type="journal article" date="2013" name="PLoS ONE">
        <title>The transcriptional co-regulator HCF-1 is required for INS-1 beta-cell glucose-stimulated insulin secretion.</title>
        <authorList>
            <person name="Iwata T.N."/>
            <person name="Cowley T.J."/>
            <person name="Sloma M."/>
            <person name="Ji Y."/>
            <person name="Kim H."/>
            <person name="Qi L."/>
            <person name="Lee S.S."/>
        </authorList>
    </citation>
    <scope>FUNCTION</scope>
</reference>
<feature type="initiator methionine" description="Removed" evidence="1">
    <location>
        <position position="1"/>
    </location>
</feature>
<feature type="chain" id="PRO_0000454328" description="HCF N-terminal chain 6" evidence="1">
    <location>
        <begin position="2"/>
        <end position="1432"/>
    </location>
</feature>
<feature type="chain" id="PRO_0000454329" description="HCF N-terminal chain 5" evidence="1">
    <location>
        <begin position="2"/>
        <end position="1332"/>
    </location>
</feature>
<feature type="chain" id="PRO_0000454330" description="HCF N-terminal chain 4" evidence="1">
    <location>
        <begin position="2"/>
        <end position="1304"/>
    </location>
</feature>
<feature type="chain" id="PRO_0000454331" description="HCF N-terminal chain 3" evidence="1">
    <location>
        <begin position="2"/>
        <end position="1110"/>
    </location>
</feature>
<feature type="chain" id="PRO_0000454332" description="HCF N-terminal chain 2" evidence="1">
    <location>
        <begin position="2"/>
        <end position="1081"/>
    </location>
</feature>
<feature type="chain" id="PRO_0000454333" description="HCF N-terminal chain 1" evidence="1">
    <location>
        <begin position="2"/>
        <end position="1019"/>
    </location>
</feature>
<feature type="chain" id="PRO_0000454334" description="HCF C-terminal chain 1" evidence="1">
    <location>
        <begin position="1020"/>
        <end position="2034"/>
    </location>
</feature>
<feature type="chain" id="PRO_0000454335" description="HCF C-terminal chain 2" evidence="1">
    <location>
        <begin position="1082"/>
        <end position="2034"/>
    </location>
</feature>
<feature type="chain" id="PRO_0000454336" description="HCF C-terminal chain 3" evidence="1">
    <location>
        <begin position="1111"/>
        <end position="2034"/>
    </location>
</feature>
<feature type="chain" id="PRO_0000454337" description="HCF C-terminal chain 4" evidence="1">
    <location>
        <begin position="1305"/>
        <end position="2034"/>
    </location>
</feature>
<feature type="chain" id="PRO_0000454338" description="HCF C-terminal chain 5" evidence="1">
    <location>
        <begin position="1333"/>
        <end position="2034"/>
    </location>
</feature>
<feature type="chain" id="PRO_0000454339" description="HCF C-terminal chain 6" evidence="1">
    <location>
        <begin position="1433"/>
        <end position="2034"/>
    </location>
</feature>
<feature type="repeat" description="Kelch 1" evidence="3">
    <location>
        <begin position="44"/>
        <end position="89"/>
    </location>
</feature>
<feature type="repeat" description="Kelch 2" evidence="3">
    <location>
        <begin position="93"/>
        <end position="140"/>
    </location>
</feature>
<feature type="repeat" description="Kelch 3" evidence="3">
    <location>
        <begin position="148"/>
        <end position="194"/>
    </location>
</feature>
<feature type="repeat" description="Kelch 4" evidence="3">
    <location>
        <begin position="217"/>
        <end position="265"/>
    </location>
</feature>
<feature type="repeat" description="Kelch 5" evidence="3">
    <location>
        <begin position="266"/>
        <end position="313"/>
    </location>
</feature>
<feature type="domain" description="Fibronectin type-III 1" evidence="4">
    <location>
        <begin position="366"/>
        <end position="469"/>
    </location>
</feature>
<feature type="repeat" description="HCF repeat 1" evidence="1">
    <location>
        <begin position="1010"/>
        <end position="1035"/>
    </location>
</feature>
<feature type="repeat" description="HCF repeat 2" evidence="1">
    <location>
        <begin position="1072"/>
        <end position="1097"/>
    </location>
</feature>
<feature type="repeat" description="HCF repeat 3" evidence="1">
    <location>
        <begin position="1101"/>
        <end position="1126"/>
    </location>
</feature>
<feature type="repeat" description="HCF repeat 4; degenerate" evidence="1">
    <location>
        <begin position="1156"/>
        <end position="1182"/>
    </location>
</feature>
<feature type="repeat" description="HCF repeat 5" evidence="1">
    <location>
        <begin position="1295"/>
        <end position="1320"/>
    </location>
</feature>
<feature type="repeat" description="HCF repeat 6" evidence="1">
    <location>
        <begin position="1323"/>
        <end position="1348"/>
    </location>
</feature>
<feature type="repeat" description="HCF repeat 7; degenerate" evidence="1">
    <location>
        <begin position="1358"/>
        <end position="1383"/>
    </location>
</feature>
<feature type="repeat" description="HCF repeat 8" evidence="1">
    <location>
        <begin position="1423"/>
        <end position="1448"/>
    </location>
</feature>
<feature type="domain" description="Fibronectin type-III 2" evidence="4">
    <location>
        <begin position="1808"/>
        <end position="1899"/>
    </location>
</feature>
<feature type="domain" description="Fibronectin type-III 3" evidence="4">
    <location>
        <begin position="1901"/>
        <end position="2017"/>
    </location>
</feature>
<feature type="region of interest" description="Disordered" evidence="5">
    <location>
        <begin position="407"/>
        <end position="434"/>
    </location>
</feature>
<feature type="region of interest" description="Required for interaction with OGT" evidence="1">
    <location>
        <begin position="500"/>
        <end position="550"/>
    </location>
</feature>
<feature type="region of interest" description="Interaction with SIN3A" evidence="1">
    <location>
        <begin position="610"/>
        <end position="722"/>
    </location>
</feature>
<feature type="region of interest" description="Interaction with ZBTB17" evidence="1">
    <location>
        <begin position="750"/>
        <end position="902"/>
    </location>
</feature>
<feature type="region of interest" description="Interaction with GABP2" evidence="1">
    <location>
        <begin position="813"/>
        <end position="912"/>
    </location>
</feature>
<feature type="region of interest" description="Disordered" evidence="5">
    <location>
        <begin position="1221"/>
        <end position="1241"/>
    </location>
</feature>
<feature type="region of interest" description="Disordered" evidence="5">
    <location>
        <begin position="1302"/>
        <end position="1374"/>
    </location>
</feature>
<feature type="region of interest" description="Disordered" evidence="5">
    <location>
        <begin position="1444"/>
        <end position="1477"/>
    </location>
</feature>
<feature type="region of interest" description="Disordered" evidence="5">
    <location>
        <begin position="1491"/>
        <end position="1525"/>
    </location>
</feature>
<feature type="region of interest" description="Disordered" evidence="5">
    <location>
        <begin position="2005"/>
        <end position="2034"/>
    </location>
</feature>
<feature type="coiled-coil region" evidence="3">
    <location>
        <begin position="1693"/>
        <end position="1723"/>
    </location>
</feature>
<feature type="compositionally biased region" description="Pro residues" evidence="5">
    <location>
        <begin position="413"/>
        <end position="428"/>
    </location>
</feature>
<feature type="compositionally biased region" description="Low complexity" evidence="5">
    <location>
        <begin position="1308"/>
        <end position="1321"/>
    </location>
</feature>
<feature type="compositionally biased region" description="Low complexity" evidence="5">
    <location>
        <begin position="1491"/>
        <end position="1501"/>
    </location>
</feature>
<feature type="compositionally biased region" description="Pro residues" evidence="5">
    <location>
        <begin position="1502"/>
        <end position="1511"/>
    </location>
</feature>
<feature type="site" description="Cleavage; by autolysis" evidence="1">
    <location>
        <begin position="1019"/>
        <end position="1020"/>
    </location>
</feature>
<feature type="site" description="Cleavage; by autolysis" evidence="1">
    <location>
        <begin position="1081"/>
        <end position="1082"/>
    </location>
</feature>
<feature type="site" description="Cleavage; by autolysis" evidence="1">
    <location>
        <begin position="1110"/>
        <end position="1111"/>
    </location>
</feature>
<feature type="site" description="Cleavage; by autolysis" evidence="1">
    <location>
        <begin position="1304"/>
        <end position="1305"/>
    </location>
</feature>
<feature type="site" description="Cleavage; by autolysis" evidence="1">
    <location>
        <begin position="1332"/>
        <end position="1333"/>
    </location>
</feature>
<feature type="site" description="Cleavage; by autolysis" evidence="1">
    <location>
        <begin position="1432"/>
        <end position="1433"/>
    </location>
</feature>
<feature type="modified residue" description="N-acetylalanine" evidence="1">
    <location>
        <position position="2"/>
    </location>
</feature>
<feature type="modified residue" description="Phosphoserine" evidence="1">
    <location>
        <position position="6"/>
    </location>
</feature>
<feature type="modified residue" description="N6-acetyllysine" evidence="1">
    <location>
        <position position="288"/>
    </location>
</feature>
<feature type="modified residue" description="Phosphoserine" evidence="1">
    <location>
        <position position="411"/>
    </location>
</feature>
<feature type="modified residue" description="Omega-N-methylarginine" evidence="1">
    <location>
        <position position="504"/>
    </location>
</feature>
<feature type="modified residue" description="Omega-N-methylarginine" evidence="1">
    <location>
        <position position="524"/>
    </location>
</feature>
<feature type="modified residue" description="Phosphoserine" evidence="1">
    <location>
        <position position="598"/>
    </location>
</feature>
<feature type="modified residue" description="Phosphoserine" evidence="1">
    <location>
        <position position="666"/>
    </location>
</feature>
<feature type="modified residue" description="Phosphoserine" evidence="1">
    <location>
        <position position="669"/>
    </location>
</feature>
<feature type="modified residue" description="N6-acetyllysine" evidence="1">
    <location>
        <position position="813"/>
    </location>
</feature>
<feature type="modified residue" description="Phosphoserine" evidence="1">
    <location>
        <position position="1204"/>
    </location>
</feature>
<feature type="modified residue" description="Phosphoserine" evidence="1">
    <location>
        <position position="1223"/>
    </location>
</feature>
<feature type="modified residue" description="Phosphothreonine" evidence="1">
    <location>
        <position position="1500"/>
    </location>
</feature>
<feature type="modified residue" description="Phosphoserine" evidence="1">
    <location>
        <position position="1506"/>
    </location>
</feature>
<feature type="modified residue" description="Phosphoserine" evidence="1">
    <location>
        <position position="1516"/>
    </location>
</feature>
<feature type="modified residue" description="Phosphoserine" evidence="1">
    <location>
        <position position="1782"/>
    </location>
</feature>
<feature type="modified residue" description="Phosphoserine" evidence="2">
    <location>
        <position position="1849"/>
    </location>
</feature>
<feature type="modified residue" description="N6-acetyllysine" evidence="1">
    <location>
        <position position="2016"/>
    </location>
</feature>
<feature type="cross-link" description="Glycyl lysine isopeptide (Lys-Gly) (interchain with G-Cter in ubiquitin)" evidence="1">
    <location>
        <position position="105"/>
    </location>
</feature>
<feature type="cross-link" description="Glycyl lysine isopeptide (Lys-Gly) (interchain with G-Cter in ubiquitin)" evidence="1">
    <location>
        <position position="163"/>
    </location>
</feature>
<feature type="cross-link" description="Glycyl lysine isopeptide (Lys-Gly) (interchain with G-Cter in ubiquitin)" evidence="1">
    <location>
        <position position="244"/>
    </location>
</feature>
<feature type="cross-link" description="Glycyl lysine isopeptide (Lys-Gly) (interchain with G-Cter in SUMO2)" evidence="1">
    <location>
        <position position="282"/>
    </location>
</feature>
<feature type="cross-link" description="Glycyl lysine isopeptide (Lys-Gly) (interchain with G-Cter in ubiquitin)" evidence="1">
    <location>
        <position position="363"/>
    </location>
</feature>
<feature type="cross-link" description="Glycyl lysine isopeptide (Lys-Gly) (interchain with G-Cter in ubiquitin)" evidence="1">
    <location>
        <position position="1818"/>
    </location>
</feature>
<feature type="cross-link" description="Glycyl lysine isopeptide (Lys-Gly) (interchain with G-Cter in ubiquitin)" evidence="1">
    <location>
        <position position="1819"/>
    </location>
</feature>
<sequence>MASAVSPANLPAVLLQPRWKRVVGWSGPVPRPRHGHRAVAIKELIVVFGGGNEGIVDELHVYNTATNQWFIPAVRGDIPPGCAAYGFVCDGTRLLVFGGMVEYGKYSNDLYELQASRWEWKRLKAKTPKNGPPPCPRLGHSFSLVGNKCYLFGGLANDSEDPKNNIPRYLNDLYILELRPGSGVVAWDIPITYGVLPPPRESHTAVVYTEKDNKKSKLVIYGGMSGCRLGDLWTLDIETLTWNKPSLSGVAPLPRSLHSATTIGNKMYVFGGWVPLVMDDVKVATHEKEWKCTNTLACLNLDTMAWETILMDTLEDNIPRARAGHCAVAINTRLYIWSGRDGYRKAWNNQVCCKDLWYLETEKPPPPARVQLVRANTNSLEVSWGAVATADSYLLQLQKYDIPATAATATSPTPNPVPSVPANPPKSPAPAAAAPAVQPLTQVGITLVPQAAAAPPSTTTIQVLPTVPGSSISVPTAARTQGVPAVLKVTGPQATTGTPLVTMRPASQAGKAPVTVTSLPASVRMVVPTQSAQGTVIGSNPQMSGMAALAAAAAATQKIPPSSAPTVLSVPAGTTIVKTVAVTPGTTTLPATVKVASSPVMVSNPATRMLKTAAAQVGTSVSSAANTSTRPIITVHKSGTVTVAQQAQVVTTVVGGVTKTITLVKSPISVPGGSALISNLGKVMSVVQTKPVQTSAVTGQASTGPVTQIIQTKGPLPAGTILKLVTSADGKPTTIITTTQASGAGTKPTILGISSVSPSTTKPGTTTIIKTIPMSAIITQAGATGVTSSPGIKSPITIITTKVMTSGTGAPAKIITAVPKIATGHGQQGVTQVVLKGAPGQPGTILRTVPMGGVRLVTPVTVSAVKPAVTTLVVKGTTGVTTLGTVTGTVSTSLAGAGAHSTSASLATPITTLGTIATLSSQVINPTAITVSAAQTTLTAAGGLTTPTITMQPVSQPTQVTLITAPSGVEAQPVHDLPVSILASPTTEQPTATVTIADSGQGDVQPGTVTLVCSNPPCETHETGTTNTATTTVVANLGGHPQPTQVQFVCDRQEAAASLVTSAVGQQNGNVVRVCSNPPCETHETGTTNTATTATSNMAGQHGCSNPPCETHETGTTSTATTAMSSMGTGQQRDARRATNTPTVVRITVAPGALERAQGTVKPPCQTQQTNMTSTTMTVQATGAPCSAGPLLRPSVALETGSHSPAFVQLALPSVRVGLSGPSSKDVPTGRQPETYHTYTTNTPTTARSIMVAGELGTARVVPTSQYDCLQASSPSSTMTMTALEALLCPSATVTQVCSNPPCETHETGTTNTATTSNAGSAQRVCSNPPCETHETGTTHTATTATSNGGAGQPEGGQQPASGHPCETHQTTSTGTTMSVSVGALIPDATPSHGTLESGLEVVAVPTVTSQAGATLLASFSTQRVCSNPPCETHETGTTHTATTVTSNMSSNQDPPPAASDQGEVASTQGDSTNITSASAITTTVSSTLPRAVTTVTQSTPVPGPSVPPPEELQVSPGPRQQLPPRQLLQSASTPLMGESAEVLSASQTPELQAAVDLSSTGDPSSVQEPTTSAVVATVVVQPPQPTQSEVDQLSLPQELMAEAQAGTTTLMVTGLTPEELAVTAAAEAAAQAAATEEAQALAIQAVLQAAQQAVMGTGEPMDTSEAAAAVTQAELGHLSAEGQEGQATTIPIVLTQQELAALVQQQQQLQEAQAQAQQQHHLPTEALAPADSLNDPSIESNCLNELASAVPSTVALLPSTATESLAPSNTFVAPQPVVVASPAKMQAAATLTEVANGIESLGVKPDLPPPPSKAPIKKENQWFDVGVIKGTSVMVTHYFLPPDDAVQSDDDSGTVPDYNQLKKQELQPGTAYKFRVAGINACGRGPFSEISAFKTCLPGFPGAPCAIKISKSPDGAHLTWEPPSVTSGKIIEYSVYLAIQSSQASGEPKSSTPAQLAFMRVYCGPSPSCLVQSSSLSNAHIDYTTKPAIIFRIAARNEKGYGPATQVRWLQETSKDSSGTKPASKRPMSSPEM</sequence>
<gene>
    <name evidence="11" type="primary">Hcfc1</name>
</gene>